<name>MED10_DEBHA</name>
<sequence>MTTATIDSSSGNGPLVSTTEQLQGLIESFIELGVLVHDNQGTQQSHTALTHKTNQVISQLSSLTDSGFTHQYPIPVDVISYIEDGRNPDVYTREFVEVTAKSNARLKGKMLGFQKLRDVLGDKLGKEFPELGSAIEDIKKRTTPDEE</sequence>
<dbReference type="EMBL" id="CR382134">
    <property type="protein sequence ID" value="CAG85422.1"/>
    <property type="molecule type" value="Genomic_DNA"/>
</dbReference>
<dbReference type="RefSeq" id="XP_457418.1">
    <property type="nucleotide sequence ID" value="XM_457418.1"/>
</dbReference>
<dbReference type="SMR" id="Q6BWK1"/>
<dbReference type="FunCoup" id="Q6BWK1">
    <property type="interactions" value="610"/>
</dbReference>
<dbReference type="STRING" id="284592.Q6BWK1"/>
<dbReference type="GeneID" id="2913345"/>
<dbReference type="KEGG" id="dha:DEHA2B10692g"/>
<dbReference type="VEuPathDB" id="FungiDB:DEHA2B10692g"/>
<dbReference type="eggNOG" id="KOG3046">
    <property type="taxonomic scope" value="Eukaryota"/>
</dbReference>
<dbReference type="HOGENOM" id="CLU_096169_1_0_1"/>
<dbReference type="InParanoid" id="Q6BWK1"/>
<dbReference type="OMA" id="QYQRAKM"/>
<dbReference type="OrthoDB" id="337270at2759"/>
<dbReference type="Proteomes" id="UP000000599">
    <property type="component" value="Chromosome B"/>
</dbReference>
<dbReference type="GO" id="GO:0016592">
    <property type="term" value="C:mediator complex"/>
    <property type="evidence" value="ECO:0007669"/>
    <property type="project" value="InterPro"/>
</dbReference>
<dbReference type="GO" id="GO:0003712">
    <property type="term" value="F:transcription coregulator activity"/>
    <property type="evidence" value="ECO:0007669"/>
    <property type="project" value="InterPro"/>
</dbReference>
<dbReference type="GO" id="GO:0006357">
    <property type="term" value="P:regulation of transcription by RNA polymerase II"/>
    <property type="evidence" value="ECO:0007669"/>
    <property type="project" value="InterPro"/>
</dbReference>
<dbReference type="InterPro" id="IPR019145">
    <property type="entry name" value="Mediator_Med10"/>
</dbReference>
<dbReference type="Pfam" id="PF09748">
    <property type="entry name" value="Med10"/>
    <property type="match status" value="1"/>
</dbReference>
<comment type="function">
    <text evidence="1">Component of the Mediator complex, a coactivator involved in the regulated transcription of nearly all RNA polymerase II-dependent genes. Mediator functions as a bridge to convey information from gene-specific regulatory proteins to the basal RNA polymerase II transcription machinery. Mediator is recruited to promoters by direct interactions with regulatory proteins and serves as a scaffold for the assembly of a functional preinitiation complex with RNA polymerase II and the general transcription factors (By similarity).</text>
</comment>
<comment type="subunit">
    <text evidence="1">Component of the Mediator complex.</text>
</comment>
<comment type="subcellular location">
    <subcellularLocation>
        <location evidence="1">Nucleus</location>
    </subcellularLocation>
</comment>
<comment type="similarity">
    <text evidence="2">Belongs to the Mediator complex subunit 10 family.</text>
</comment>
<feature type="chain" id="PRO_0000303170" description="Mediator of RNA polymerase II transcription subunit 10">
    <location>
        <begin position="1"/>
        <end position="147"/>
    </location>
</feature>
<proteinExistence type="inferred from homology"/>
<organism>
    <name type="scientific">Debaryomyces hansenii (strain ATCC 36239 / CBS 767 / BCRC 21394 / JCM 1990 / NBRC 0083 / IGC 2968)</name>
    <name type="common">Yeast</name>
    <name type="synonym">Torulaspora hansenii</name>
    <dbReference type="NCBI Taxonomy" id="284592"/>
    <lineage>
        <taxon>Eukaryota</taxon>
        <taxon>Fungi</taxon>
        <taxon>Dikarya</taxon>
        <taxon>Ascomycota</taxon>
        <taxon>Saccharomycotina</taxon>
        <taxon>Pichiomycetes</taxon>
        <taxon>Debaryomycetaceae</taxon>
        <taxon>Debaryomyces</taxon>
    </lineage>
</organism>
<accession>Q6BWK1</accession>
<reference key="1">
    <citation type="journal article" date="2004" name="Nature">
        <title>Genome evolution in yeasts.</title>
        <authorList>
            <person name="Dujon B."/>
            <person name="Sherman D."/>
            <person name="Fischer G."/>
            <person name="Durrens P."/>
            <person name="Casaregola S."/>
            <person name="Lafontaine I."/>
            <person name="de Montigny J."/>
            <person name="Marck C."/>
            <person name="Neuveglise C."/>
            <person name="Talla E."/>
            <person name="Goffard N."/>
            <person name="Frangeul L."/>
            <person name="Aigle M."/>
            <person name="Anthouard V."/>
            <person name="Babour A."/>
            <person name="Barbe V."/>
            <person name="Barnay S."/>
            <person name="Blanchin S."/>
            <person name="Beckerich J.-M."/>
            <person name="Beyne E."/>
            <person name="Bleykasten C."/>
            <person name="Boisrame A."/>
            <person name="Boyer J."/>
            <person name="Cattolico L."/>
            <person name="Confanioleri F."/>
            <person name="de Daruvar A."/>
            <person name="Despons L."/>
            <person name="Fabre E."/>
            <person name="Fairhead C."/>
            <person name="Ferry-Dumazet H."/>
            <person name="Groppi A."/>
            <person name="Hantraye F."/>
            <person name="Hennequin C."/>
            <person name="Jauniaux N."/>
            <person name="Joyet P."/>
            <person name="Kachouri R."/>
            <person name="Kerrest A."/>
            <person name="Koszul R."/>
            <person name="Lemaire M."/>
            <person name="Lesur I."/>
            <person name="Ma L."/>
            <person name="Muller H."/>
            <person name="Nicaud J.-M."/>
            <person name="Nikolski M."/>
            <person name="Oztas S."/>
            <person name="Ozier-Kalogeropoulos O."/>
            <person name="Pellenz S."/>
            <person name="Potier S."/>
            <person name="Richard G.-F."/>
            <person name="Straub M.-L."/>
            <person name="Suleau A."/>
            <person name="Swennen D."/>
            <person name="Tekaia F."/>
            <person name="Wesolowski-Louvel M."/>
            <person name="Westhof E."/>
            <person name="Wirth B."/>
            <person name="Zeniou-Meyer M."/>
            <person name="Zivanovic Y."/>
            <person name="Bolotin-Fukuhara M."/>
            <person name="Thierry A."/>
            <person name="Bouchier C."/>
            <person name="Caudron B."/>
            <person name="Scarpelli C."/>
            <person name="Gaillardin C."/>
            <person name="Weissenbach J."/>
            <person name="Wincker P."/>
            <person name="Souciet J.-L."/>
        </authorList>
    </citation>
    <scope>NUCLEOTIDE SEQUENCE [LARGE SCALE GENOMIC DNA]</scope>
    <source>
        <strain>ATCC 36239 / CBS 767 / BCRC 21394 / JCM 1990 / NBRC 0083 / IGC 2968</strain>
    </source>
</reference>
<evidence type="ECO:0000250" key="1"/>
<evidence type="ECO:0000305" key="2"/>
<protein>
    <recommendedName>
        <fullName>Mediator of RNA polymerase II transcription subunit 10</fullName>
    </recommendedName>
    <alternativeName>
        <fullName>Mediator complex subunit 10</fullName>
    </alternativeName>
</protein>
<gene>
    <name type="primary">NUT2</name>
    <name type="synonym">MED10</name>
    <name type="ordered locus">DEHA2B10692g</name>
</gene>
<keyword id="KW-0010">Activator</keyword>
<keyword id="KW-0539">Nucleus</keyword>
<keyword id="KW-1185">Reference proteome</keyword>
<keyword id="KW-0804">Transcription</keyword>
<keyword id="KW-0805">Transcription regulation</keyword>